<comment type="function">
    <text evidence="1">Catalyzes the oxidation of erythronate-4-phosphate to 3-hydroxy-2-oxo-4-phosphonooxybutanoate.</text>
</comment>
<comment type="catalytic activity">
    <reaction evidence="1">
        <text>4-phospho-D-erythronate + NAD(+) = (R)-3-hydroxy-2-oxo-4-phosphooxybutanoate + NADH + H(+)</text>
        <dbReference type="Rhea" id="RHEA:18829"/>
        <dbReference type="ChEBI" id="CHEBI:15378"/>
        <dbReference type="ChEBI" id="CHEBI:57540"/>
        <dbReference type="ChEBI" id="CHEBI:57945"/>
        <dbReference type="ChEBI" id="CHEBI:58538"/>
        <dbReference type="ChEBI" id="CHEBI:58766"/>
        <dbReference type="EC" id="1.1.1.290"/>
    </reaction>
</comment>
<comment type="pathway">
    <text evidence="1">Cofactor biosynthesis; pyridoxine 5'-phosphate biosynthesis; pyridoxine 5'-phosphate from D-erythrose 4-phosphate: step 2/5.</text>
</comment>
<comment type="subunit">
    <text evidence="1">Homodimer.</text>
</comment>
<comment type="subcellular location">
    <subcellularLocation>
        <location evidence="1">Cytoplasm</location>
    </subcellularLocation>
</comment>
<comment type="similarity">
    <text evidence="1">Belongs to the D-isomer specific 2-hydroxyacid dehydrogenase family. PdxB subfamily.</text>
</comment>
<protein>
    <recommendedName>
        <fullName evidence="1">Erythronate-4-phosphate dehydrogenase</fullName>
        <ecNumber evidence="1">1.1.1.290</ecNumber>
    </recommendedName>
</protein>
<keyword id="KW-0963">Cytoplasm</keyword>
<keyword id="KW-0520">NAD</keyword>
<keyword id="KW-0560">Oxidoreductase</keyword>
<keyword id="KW-0664">Pyridoxine biosynthesis</keyword>
<reference key="1">
    <citation type="submission" date="2008-02" db="EMBL/GenBank/DDBJ databases">
        <title>Complete sequence of Pseudomonas putida W619.</title>
        <authorList>
            <person name="Copeland A."/>
            <person name="Lucas S."/>
            <person name="Lapidus A."/>
            <person name="Barry K."/>
            <person name="Detter J.C."/>
            <person name="Glavina del Rio T."/>
            <person name="Dalin E."/>
            <person name="Tice H."/>
            <person name="Pitluck S."/>
            <person name="Chain P."/>
            <person name="Malfatti S."/>
            <person name="Shin M."/>
            <person name="Vergez L."/>
            <person name="Schmutz J."/>
            <person name="Larimer F."/>
            <person name="Land M."/>
            <person name="Hauser L."/>
            <person name="Kyrpides N."/>
            <person name="Kim E."/>
            <person name="Taghavi S."/>
            <person name="Vangronsveld D."/>
            <person name="van der Lelie D."/>
            <person name="Richardson P."/>
        </authorList>
    </citation>
    <scope>NUCLEOTIDE SEQUENCE [LARGE SCALE GENOMIC DNA]</scope>
    <source>
        <strain>W619</strain>
    </source>
</reference>
<dbReference type="EC" id="1.1.1.290" evidence="1"/>
<dbReference type="EMBL" id="CP000949">
    <property type="protein sequence ID" value="ACA72139.1"/>
    <property type="molecule type" value="Genomic_DNA"/>
</dbReference>
<dbReference type="SMR" id="B1J5D7"/>
<dbReference type="STRING" id="390235.PputW619_1634"/>
<dbReference type="KEGG" id="ppw:PputW619_1634"/>
<dbReference type="eggNOG" id="COG0111">
    <property type="taxonomic scope" value="Bacteria"/>
</dbReference>
<dbReference type="HOGENOM" id="CLU_019796_4_0_6"/>
<dbReference type="OrthoDB" id="9770208at2"/>
<dbReference type="UniPathway" id="UPA00244">
    <property type="reaction ID" value="UER00310"/>
</dbReference>
<dbReference type="GO" id="GO:0005829">
    <property type="term" value="C:cytosol"/>
    <property type="evidence" value="ECO:0007669"/>
    <property type="project" value="TreeGrafter"/>
</dbReference>
<dbReference type="GO" id="GO:0033711">
    <property type="term" value="F:4-phosphoerythronate dehydrogenase activity"/>
    <property type="evidence" value="ECO:0007669"/>
    <property type="project" value="UniProtKB-EC"/>
</dbReference>
<dbReference type="GO" id="GO:0051287">
    <property type="term" value="F:NAD binding"/>
    <property type="evidence" value="ECO:0007669"/>
    <property type="project" value="InterPro"/>
</dbReference>
<dbReference type="GO" id="GO:0046983">
    <property type="term" value="F:protein dimerization activity"/>
    <property type="evidence" value="ECO:0007669"/>
    <property type="project" value="InterPro"/>
</dbReference>
<dbReference type="GO" id="GO:0036001">
    <property type="term" value="P:'de novo' pyridoxal 5'-phosphate biosynthetic process"/>
    <property type="evidence" value="ECO:0007669"/>
    <property type="project" value="TreeGrafter"/>
</dbReference>
<dbReference type="GO" id="GO:0008615">
    <property type="term" value="P:pyridoxine biosynthetic process"/>
    <property type="evidence" value="ECO:0007669"/>
    <property type="project" value="UniProtKB-UniRule"/>
</dbReference>
<dbReference type="CDD" id="cd12158">
    <property type="entry name" value="ErythrP_dh"/>
    <property type="match status" value="1"/>
</dbReference>
<dbReference type="Gene3D" id="3.30.1370.170">
    <property type="match status" value="1"/>
</dbReference>
<dbReference type="Gene3D" id="3.40.50.720">
    <property type="entry name" value="NAD(P)-binding Rossmann-like Domain"/>
    <property type="match status" value="2"/>
</dbReference>
<dbReference type="HAMAP" id="MF_01825">
    <property type="entry name" value="PdxB"/>
    <property type="match status" value="1"/>
</dbReference>
<dbReference type="InterPro" id="IPR006139">
    <property type="entry name" value="D-isomer_2_OHA_DH_cat_dom"/>
</dbReference>
<dbReference type="InterPro" id="IPR029753">
    <property type="entry name" value="D-isomer_DH_CS"/>
</dbReference>
<dbReference type="InterPro" id="IPR006140">
    <property type="entry name" value="D-isomer_DH_NAD-bd"/>
</dbReference>
<dbReference type="InterPro" id="IPR020921">
    <property type="entry name" value="Erythronate-4-P_DHase"/>
</dbReference>
<dbReference type="InterPro" id="IPR024531">
    <property type="entry name" value="Erythronate-4-P_DHase_dimer"/>
</dbReference>
<dbReference type="InterPro" id="IPR036291">
    <property type="entry name" value="NAD(P)-bd_dom_sf"/>
</dbReference>
<dbReference type="InterPro" id="IPR038251">
    <property type="entry name" value="PdxB_dimer_sf"/>
</dbReference>
<dbReference type="NCBIfam" id="NF001309">
    <property type="entry name" value="PRK00257.1"/>
    <property type="match status" value="1"/>
</dbReference>
<dbReference type="PANTHER" id="PTHR42938">
    <property type="entry name" value="FORMATE DEHYDROGENASE 1"/>
    <property type="match status" value="1"/>
</dbReference>
<dbReference type="PANTHER" id="PTHR42938:SF9">
    <property type="entry name" value="FORMATE DEHYDROGENASE 1"/>
    <property type="match status" value="1"/>
</dbReference>
<dbReference type="Pfam" id="PF00389">
    <property type="entry name" value="2-Hacid_dh"/>
    <property type="match status" value="1"/>
</dbReference>
<dbReference type="Pfam" id="PF02826">
    <property type="entry name" value="2-Hacid_dh_C"/>
    <property type="match status" value="1"/>
</dbReference>
<dbReference type="Pfam" id="PF11890">
    <property type="entry name" value="DUF3410"/>
    <property type="match status" value="1"/>
</dbReference>
<dbReference type="SUPFAM" id="SSF52283">
    <property type="entry name" value="Formate/glycerate dehydrogenase catalytic domain-like"/>
    <property type="match status" value="1"/>
</dbReference>
<dbReference type="SUPFAM" id="SSF51735">
    <property type="entry name" value="NAD(P)-binding Rossmann-fold domains"/>
    <property type="match status" value="1"/>
</dbReference>
<dbReference type="PROSITE" id="PS00671">
    <property type="entry name" value="D_2_HYDROXYACID_DH_3"/>
    <property type="match status" value="1"/>
</dbReference>
<sequence length="380" mass="41580">MLIVADENIPLLDAFFEGFGEIRRYPGRSMDAASVKEADVLLVRSVTKVDRQLLEGSRVRFVGTCTIGTDHLDLDYFAEAGIHWSSAPGCNARGVVDYVLGSLLTLADLDGAALPQRTYGVVGAGEVGGRLVRVLHGMGWKVLVCDPLRQAAEGGDFVSLQTVLEQCDVISLHTPLQQGGEHPTWHLLGQAQLAQLRPGAWLINASRGPVVDNLALRELLLDREDVHAVLDVWEGEPQVDLQLADLCTLATPHIAGYSLDGRQRGTAQIYQALCRFLGEAERVQLQDLLPKPPLAQIEFDGEADLGWALATLCRAVYDPRRDDADFRRSLSDDAAEQRAAFDLLRKQYPPRREIEGLAVRLRGEAPQLVQMVNALGAVVV</sequence>
<accession>B1J5D7</accession>
<name>PDXB_PSEPW</name>
<gene>
    <name evidence="1" type="primary">pdxB</name>
    <name type="ordered locus">PputW619_1634</name>
</gene>
<feature type="chain" id="PRO_1000188273" description="Erythronate-4-phosphate dehydrogenase">
    <location>
        <begin position="1"/>
        <end position="380"/>
    </location>
</feature>
<feature type="active site" evidence="1">
    <location>
        <position position="207"/>
    </location>
</feature>
<feature type="active site" evidence="1">
    <location>
        <position position="236"/>
    </location>
</feature>
<feature type="active site" description="Proton donor" evidence="1">
    <location>
        <position position="253"/>
    </location>
</feature>
<feature type="binding site" evidence="1">
    <location>
        <position position="45"/>
    </location>
    <ligand>
        <name>substrate</name>
    </ligand>
</feature>
<feature type="binding site" evidence="1">
    <location>
        <position position="66"/>
    </location>
    <ligand>
        <name>substrate</name>
    </ligand>
</feature>
<feature type="binding site" evidence="1">
    <location>
        <position position="146"/>
    </location>
    <ligand>
        <name>NAD(+)</name>
        <dbReference type="ChEBI" id="CHEBI:57540"/>
    </ligand>
</feature>
<feature type="binding site" evidence="1">
    <location>
        <position position="174"/>
    </location>
    <ligand>
        <name>NAD(+)</name>
        <dbReference type="ChEBI" id="CHEBI:57540"/>
    </ligand>
</feature>
<feature type="binding site" evidence="1">
    <location>
        <begin position="205"/>
        <end position="207"/>
    </location>
    <ligand>
        <name>NAD(+)</name>
        <dbReference type="ChEBI" id="CHEBI:57540"/>
    </ligand>
</feature>
<feature type="binding site" evidence="1">
    <location>
        <position position="231"/>
    </location>
    <ligand>
        <name>NAD(+)</name>
        <dbReference type="ChEBI" id="CHEBI:57540"/>
    </ligand>
</feature>
<feature type="binding site" evidence="1">
    <location>
        <position position="256"/>
    </location>
    <ligand>
        <name>NAD(+)</name>
        <dbReference type="ChEBI" id="CHEBI:57540"/>
    </ligand>
</feature>
<feature type="binding site" evidence="1">
    <location>
        <position position="257"/>
    </location>
    <ligand>
        <name>substrate</name>
    </ligand>
</feature>
<organism>
    <name type="scientific">Pseudomonas putida (strain W619)</name>
    <dbReference type="NCBI Taxonomy" id="390235"/>
    <lineage>
        <taxon>Bacteria</taxon>
        <taxon>Pseudomonadati</taxon>
        <taxon>Pseudomonadota</taxon>
        <taxon>Gammaproteobacteria</taxon>
        <taxon>Pseudomonadales</taxon>
        <taxon>Pseudomonadaceae</taxon>
        <taxon>Pseudomonas</taxon>
    </lineage>
</organism>
<proteinExistence type="inferred from homology"/>
<evidence type="ECO:0000255" key="1">
    <source>
        <dbReference type="HAMAP-Rule" id="MF_01825"/>
    </source>
</evidence>